<feature type="chain" id="PRO_0000269485" description="Putative sugar phosphate isomerase RBE_0278">
    <location>
        <begin position="1"/>
        <end position="144"/>
    </location>
</feature>
<feature type="active site" description="Proton donor" evidence="1">
    <location>
        <position position="101"/>
    </location>
</feature>
<feature type="binding site" evidence="1">
    <location>
        <position position="12"/>
    </location>
    <ligand>
        <name>substrate</name>
    </ligand>
</feature>
<feature type="binding site" evidence="1">
    <location>
        <position position="135"/>
    </location>
    <ligand>
        <name>substrate</name>
    </ligand>
</feature>
<evidence type="ECO:0000250" key="1"/>
<evidence type="ECO:0000305" key="2"/>
<protein>
    <recommendedName>
        <fullName>Putative sugar phosphate isomerase RBE_0278</fullName>
        <ecNumber>5.3.1.-</ecNumber>
    </recommendedName>
</protein>
<name>Y278_RICBR</name>
<keyword id="KW-0413">Isomerase</keyword>
<reference key="1">
    <citation type="journal article" date="2006" name="PLoS Genet.">
        <title>Genome sequence of Rickettsia bellii illuminates the role of amoebae in gene exchanges between intracellular pathogens.</title>
        <authorList>
            <person name="Ogata H."/>
            <person name="La Scola B."/>
            <person name="Audic S."/>
            <person name="Renesto P."/>
            <person name="Blanc G."/>
            <person name="Robert C."/>
            <person name="Fournier P.-E."/>
            <person name="Claverie J.-M."/>
            <person name="Raoult D."/>
        </authorList>
    </citation>
    <scope>NUCLEOTIDE SEQUENCE [LARGE SCALE GENOMIC DNA]</scope>
    <source>
        <strain>RML369-C</strain>
    </source>
</reference>
<dbReference type="EC" id="5.3.1.-"/>
<dbReference type="EMBL" id="CP000087">
    <property type="protein sequence ID" value="ABE04359.1"/>
    <property type="molecule type" value="Genomic_DNA"/>
</dbReference>
<dbReference type="RefSeq" id="WP_011476971.1">
    <property type="nucleotide sequence ID" value="NC_007940.1"/>
</dbReference>
<dbReference type="SMR" id="Q1RJV5"/>
<dbReference type="KEGG" id="rbe:RBE_0278"/>
<dbReference type="eggNOG" id="COG0698">
    <property type="taxonomic scope" value="Bacteria"/>
</dbReference>
<dbReference type="HOGENOM" id="CLU_091396_4_1_5"/>
<dbReference type="OrthoDB" id="1778624at2"/>
<dbReference type="Proteomes" id="UP000001951">
    <property type="component" value="Chromosome"/>
</dbReference>
<dbReference type="GO" id="GO:0016861">
    <property type="term" value="F:intramolecular oxidoreductase activity, interconverting aldoses and ketoses"/>
    <property type="evidence" value="ECO:0007669"/>
    <property type="project" value="UniProtKB-ARBA"/>
</dbReference>
<dbReference type="GO" id="GO:0005975">
    <property type="term" value="P:carbohydrate metabolic process"/>
    <property type="evidence" value="ECO:0007669"/>
    <property type="project" value="InterPro"/>
</dbReference>
<dbReference type="Gene3D" id="3.40.1400.10">
    <property type="entry name" value="Sugar-phosphate isomerase, RpiB/LacA/LacB"/>
    <property type="match status" value="1"/>
</dbReference>
<dbReference type="InterPro" id="IPR004785">
    <property type="entry name" value="RpiB"/>
</dbReference>
<dbReference type="InterPro" id="IPR003500">
    <property type="entry name" value="RpiB_LacA_LacB"/>
</dbReference>
<dbReference type="InterPro" id="IPR036569">
    <property type="entry name" value="RpiB_LacA_LacB_sf"/>
</dbReference>
<dbReference type="NCBIfam" id="NF004051">
    <property type="entry name" value="PRK05571.1"/>
    <property type="match status" value="1"/>
</dbReference>
<dbReference type="NCBIfam" id="TIGR01120">
    <property type="entry name" value="rpiB"/>
    <property type="match status" value="1"/>
</dbReference>
<dbReference type="NCBIfam" id="TIGR00689">
    <property type="entry name" value="rpiB_lacA_lacB"/>
    <property type="match status" value="1"/>
</dbReference>
<dbReference type="PANTHER" id="PTHR30345:SF0">
    <property type="entry name" value="DNA DAMAGE-REPAIR_TOLERATION PROTEIN DRT102"/>
    <property type="match status" value="1"/>
</dbReference>
<dbReference type="PANTHER" id="PTHR30345">
    <property type="entry name" value="RIBOSE-5-PHOSPHATE ISOMERASE B"/>
    <property type="match status" value="1"/>
</dbReference>
<dbReference type="Pfam" id="PF02502">
    <property type="entry name" value="LacAB_rpiB"/>
    <property type="match status" value="1"/>
</dbReference>
<dbReference type="PIRSF" id="PIRSF005384">
    <property type="entry name" value="RpiB_LacA_B"/>
    <property type="match status" value="1"/>
</dbReference>
<dbReference type="SUPFAM" id="SSF89623">
    <property type="entry name" value="Ribose/Galactose isomerase RpiB/AlsB"/>
    <property type="match status" value="1"/>
</dbReference>
<sequence>MKTYDIVIASDHSGYELKSIIIEYLQKKSLSVYDCGTHNTQSVDYPDYAKKVVNNIIEKLARIGILIGDTGIGMSIAANRSSEIRAALCVNVSTAESAKAHNDANILVLGAKTVDHKTVFDIIDKFLATKFEGGRHSVRLLKIE</sequence>
<accession>Q1RJV5</accession>
<proteinExistence type="inferred from homology"/>
<comment type="similarity">
    <text evidence="2">Belongs to the LacAB/RpiB family.</text>
</comment>
<organism>
    <name type="scientific">Rickettsia bellii (strain RML369-C)</name>
    <dbReference type="NCBI Taxonomy" id="336407"/>
    <lineage>
        <taxon>Bacteria</taxon>
        <taxon>Pseudomonadati</taxon>
        <taxon>Pseudomonadota</taxon>
        <taxon>Alphaproteobacteria</taxon>
        <taxon>Rickettsiales</taxon>
        <taxon>Rickettsiaceae</taxon>
        <taxon>Rickettsieae</taxon>
        <taxon>Rickettsia</taxon>
        <taxon>belli group</taxon>
    </lineage>
</organism>
<gene>
    <name type="ordered locus">RBE_0278</name>
</gene>